<accession>P48683</accession>
<protein>
    <recommendedName>
        <fullName evidence="1">Ribulose bisphosphate carboxylase large chain</fullName>
        <shortName evidence="1">RuBisCO large subunit</shortName>
        <ecNumber evidence="1">4.1.1.39</ecNumber>
    </recommendedName>
</protein>
<geneLocation type="chloroplast"/>
<sequence length="479" mass="53192">MSPQTETKASVGFKAGVKDYKLTYYTPEYETKDTDILAAFRVTPQPGVPPEEAGAAVAAESSTGTWTTVWTDGLTSLDRYKGRCYHIEPVVGEENQYIAYVAYPLDLFEEGSVTNMFTSIVGNVFGFKALRALRLEDLRIPTSYSKTFQGPPHGIQVERDKLNKYGRPLLGCTIKPKLGLSAKNYGRAVYECLRGGLDFTKDDENVNSQPFMRWRDRFVFCAEAIYKAQAETGEIKGHYLNATAGTCEEMIKRAVFARELGVPIVMHDYLTGGFTANTSLAHYCRDNGLLLHIHRAMHAVIDRQKNHGMHFRVLAKALRMSGGDHIHAGTVVGKLEGEREMTLGFVDLLRDDFIEKDRSRGIFFTQDWVSMPGVIPVASGGIHVWHMPALTEIFGDDSVLQFGGGTLGHPWGNAPGAVANRVALEACVQARNEGRDLAREGAEIIREASKWSPELAAACEVWKQIKFDFEPVDKLDKTK</sequence>
<proteinExistence type="inferred from homology"/>
<reference key="1">
    <citation type="submission" date="1993-11" db="EMBL/GenBank/DDBJ databases">
        <title>DNA sequence for the large subunit of ribulose-1,5-bisphosphate carboxylase/oxygenase from Ananas comosus (Bromeliaceae).</title>
        <authorList>
            <person name="Clark W.D."/>
            <person name="Gaut B.S."/>
            <person name="Clegg M.T."/>
        </authorList>
    </citation>
    <scope>NUCLEOTIDE SEQUENCE [GENOMIC DNA]</scope>
    <source>
        <tissue>Leaf</tissue>
    </source>
</reference>
<name>RBL_ANACO</name>
<organism>
    <name type="scientific">Ananas comosus</name>
    <name type="common">Pineapple</name>
    <name type="synonym">Ananas ananas</name>
    <dbReference type="NCBI Taxonomy" id="4615"/>
    <lineage>
        <taxon>Eukaryota</taxon>
        <taxon>Viridiplantae</taxon>
        <taxon>Streptophyta</taxon>
        <taxon>Embryophyta</taxon>
        <taxon>Tracheophyta</taxon>
        <taxon>Spermatophyta</taxon>
        <taxon>Magnoliopsida</taxon>
        <taxon>Liliopsida</taxon>
        <taxon>Poales</taxon>
        <taxon>Bromeliaceae</taxon>
        <taxon>Bromelioideae</taxon>
        <taxon>Ananas</taxon>
    </lineage>
</organism>
<evidence type="ECO:0000255" key="1">
    <source>
        <dbReference type="HAMAP-Rule" id="MF_01338"/>
    </source>
</evidence>
<comment type="function">
    <text evidence="1">RuBisCO catalyzes two reactions: the carboxylation of D-ribulose 1,5-bisphosphate, the primary event in carbon dioxide fixation, as well as the oxidative fragmentation of the pentose substrate in the photorespiration process. Both reactions occur simultaneously and in competition at the same active site.</text>
</comment>
<comment type="catalytic activity">
    <reaction evidence="1">
        <text>2 (2R)-3-phosphoglycerate + 2 H(+) = D-ribulose 1,5-bisphosphate + CO2 + H2O</text>
        <dbReference type="Rhea" id="RHEA:23124"/>
        <dbReference type="ChEBI" id="CHEBI:15377"/>
        <dbReference type="ChEBI" id="CHEBI:15378"/>
        <dbReference type="ChEBI" id="CHEBI:16526"/>
        <dbReference type="ChEBI" id="CHEBI:57870"/>
        <dbReference type="ChEBI" id="CHEBI:58272"/>
        <dbReference type="EC" id="4.1.1.39"/>
    </reaction>
</comment>
<comment type="catalytic activity">
    <reaction evidence="1">
        <text>D-ribulose 1,5-bisphosphate + O2 = 2-phosphoglycolate + (2R)-3-phosphoglycerate + 2 H(+)</text>
        <dbReference type="Rhea" id="RHEA:36631"/>
        <dbReference type="ChEBI" id="CHEBI:15378"/>
        <dbReference type="ChEBI" id="CHEBI:15379"/>
        <dbReference type="ChEBI" id="CHEBI:57870"/>
        <dbReference type="ChEBI" id="CHEBI:58033"/>
        <dbReference type="ChEBI" id="CHEBI:58272"/>
    </reaction>
</comment>
<comment type="cofactor">
    <cofactor evidence="1">
        <name>Mg(2+)</name>
        <dbReference type="ChEBI" id="CHEBI:18420"/>
    </cofactor>
    <text evidence="1">Binds 1 Mg(2+) ion per subunit.</text>
</comment>
<comment type="subunit">
    <text evidence="1">Heterohexadecamer of 8 large chains and 8 small chains; disulfide-linked. The disulfide link is formed within the large subunit homodimers.</text>
</comment>
<comment type="subcellular location">
    <subcellularLocation>
        <location>Plastid</location>
        <location>Chloroplast</location>
    </subcellularLocation>
</comment>
<comment type="PTM">
    <text evidence="1">The disulfide bond which can form in the large chain dimeric partners within the hexadecamer appears to be associated with oxidative stress and protein turnover.</text>
</comment>
<comment type="miscellaneous">
    <text evidence="1">The basic functional RuBisCO is composed of a large chain homodimer in a 'head-to-tail' conformation. In form I RuBisCO this homodimer is arranged in a barrel-like tetramer with the small subunits forming a tetrameric 'cap' on each end of the 'barrel'.</text>
</comment>
<comment type="similarity">
    <text evidence="1">Belongs to the RuBisCO large chain family. Type I subfamily.</text>
</comment>
<gene>
    <name evidence="1" type="primary">rbcL</name>
</gene>
<keyword id="KW-0007">Acetylation</keyword>
<keyword id="KW-0113">Calvin cycle</keyword>
<keyword id="KW-0120">Carbon dioxide fixation</keyword>
<keyword id="KW-0150">Chloroplast</keyword>
<keyword id="KW-1015">Disulfide bond</keyword>
<keyword id="KW-0456">Lyase</keyword>
<keyword id="KW-0460">Magnesium</keyword>
<keyword id="KW-0479">Metal-binding</keyword>
<keyword id="KW-0488">Methylation</keyword>
<keyword id="KW-0503">Monooxygenase</keyword>
<keyword id="KW-0560">Oxidoreductase</keyword>
<keyword id="KW-0601">Photorespiration</keyword>
<keyword id="KW-0602">Photosynthesis</keyword>
<keyword id="KW-0934">Plastid</keyword>
<feature type="propeptide" id="PRO_0000031113" evidence="1">
    <location>
        <begin position="1"/>
        <end position="2"/>
    </location>
</feature>
<feature type="chain" id="PRO_0000031114" description="Ribulose bisphosphate carboxylase large chain">
    <location>
        <begin position="3"/>
        <end position="479"/>
    </location>
</feature>
<feature type="active site" description="Proton acceptor" evidence="1">
    <location>
        <position position="175"/>
    </location>
</feature>
<feature type="active site" description="Proton acceptor" evidence="1">
    <location>
        <position position="294"/>
    </location>
</feature>
<feature type="binding site" description="in homodimeric partner" evidence="1">
    <location>
        <position position="123"/>
    </location>
    <ligand>
        <name>substrate</name>
    </ligand>
</feature>
<feature type="binding site" evidence="1">
    <location>
        <position position="173"/>
    </location>
    <ligand>
        <name>substrate</name>
    </ligand>
</feature>
<feature type="binding site" evidence="1">
    <location>
        <position position="177"/>
    </location>
    <ligand>
        <name>substrate</name>
    </ligand>
</feature>
<feature type="binding site" description="via carbamate group" evidence="1">
    <location>
        <position position="201"/>
    </location>
    <ligand>
        <name>Mg(2+)</name>
        <dbReference type="ChEBI" id="CHEBI:18420"/>
    </ligand>
</feature>
<feature type="binding site" evidence="1">
    <location>
        <position position="203"/>
    </location>
    <ligand>
        <name>Mg(2+)</name>
        <dbReference type="ChEBI" id="CHEBI:18420"/>
    </ligand>
</feature>
<feature type="binding site" evidence="1">
    <location>
        <position position="204"/>
    </location>
    <ligand>
        <name>Mg(2+)</name>
        <dbReference type="ChEBI" id="CHEBI:18420"/>
    </ligand>
</feature>
<feature type="binding site" evidence="1">
    <location>
        <position position="295"/>
    </location>
    <ligand>
        <name>substrate</name>
    </ligand>
</feature>
<feature type="binding site" evidence="1">
    <location>
        <position position="327"/>
    </location>
    <ligand>
        <name>substrate</name>
    </ligand>
</feature>
<feature type="binding site" evidence="1">
    <location>
        <position position="379"/>
    </location>
    <ligand>
        <name>substrate</name>
    </ligand>
</feature>
<feature type="site" description="Transition state stabilizer" evidence="1">
    <location>
        <position position="334"/>
    </location>
</feature>
<feature type="modified residue" description="N-acetylproline" evidence="1">
    <location>
        <position position="3"/>
    </location>
</feature>
<feature type="modified residue" description="N6,N6,N6-trimethyllysine" evidence="1">
    <location>
        <position position="14"/>
    </location>
</feature>
<feature type="modified residue" description="N6-carboxylysine" evidence="1">
    <location>
        <position position="201"/>
    </location>
</feature>
<feature type="disulfide bond" description="Interchain; in linked form" evidence="1">
    <location>
        <position position="247"/>
    </location>
</feature>
<dbReference type="EC" id="4.1.1.39" evidence="1"/>
<dbReference type="EMBL" id="L19977">
    <property type="protein sequence ID" value="AAA84020.1"/>
    <property type="molecule type" value="Genomic_DNA"/>
</dbReference>
<dbReference type="RefSeq" id="YP_009116350.1">
    <property type="nucleotide sequence ID" value="NC_026220.1"/>
</dbReference>
<dbReference type="SMR" id="P48683"/>
<dbReference type="GeneID" id="22909381"/>
<dbReference type="OrthoDB" id="725602at2759"/>
<dbReference type="Proteomes" id="UP000515123">
    <property type="component" value="Chloroplast Pltd"/>
</dbReference>
<dbReference type="GO" id="GO:0009507">
    <property type="term" value="C:chloroplast"/>
    <property type="evidence" value="ECO:0007669"/>
    <property type="project" value="UniProtKB-SubCell"/>
</dbReference>
<dbReference type="GO" id="GO:0000287">
    <property type="term" value="F:magnesium ion binding"/>
    <property type="evidence" value="ECO:0007669"/>
    <property type="project" value="UniProtKB-UniRule"/>
</dbReference>
<dbReference type="GO" id="GO:0004497">
    <property type="term" value="F:monooxygenase activity"/>
    <property type="evidence" value="ECO:0007669"/>
    <property type="project" value="UniProtKB-KW"/>
</dbReference>
<dbReference type="GO" id="GO:0016984">
    <property type="term" value="F:ribulose-bisphosphate carboxylase activity"/>
    <property type="evidence" value="ECO:0007669"/>
    <property type="project" value="UniProtKB-UniRule"/>
</dbReference>
<dbReference type="GO" id="GO:0009853">
    <property type="term" value="P:photorespiration"/>
    <property type="evidence" value="ECO:0007669"/>
    <property type="project" value="UniProtKB-KW"/>
</dbReference>
<dbReference type="GO" id="GO:0019253">
    <property type="term" value="P:reductive pentose-phosphate cycle"/>
    <property type="evidence" value="ECO:0007669"/>
    <property type="project" value="UniProtKB-UniRule"/>
</dbReference>
<dbReference type="CDD" id="cd08212">
    <property type="entry name" value="RuBisCO_large_I"/>
    <property type="match status" value="1"/>
</dbReference>
<dbReference type="FunFam" id="3.20.20.110:FF:000001">
    <property type="entry name" value="Ribulose bisphosphate carboxylase large chain"/>
    <property type="match status" value="1"/>
</dbReference>
<dbReference type="FunFam" id="3.30.70.150:FF:000001">
    <property type="entry name" value="Ribulose bisphosphate carboxylase large chain"/>
    <property type="match status" value="1"/>
</dbReference>
<dbReference type="Gene3D" id="3.20.20.110">
    <property type="entry name" value="Ribulose bisphosphate carboxylase, large subunit, C-terminal domain"/>
    <property type="match status" value="1"/>
</dbReference>
<dbReference type="Gene3D" id="3.30.70.150">
    <property type="entry name" value="RuBisCO large subunit, N-terminal domain"/>
    <property type="match status" value="1"/>
</dbReference>
<dbReference type="HAMAP" id="MF_01338">
    <property type="entry name" value="RuBisCO_L_type1"/>
    <property type="match status" value="1"/>
</dbReference>
<dbReference type="InterPro" id="IPR033966">
    <property type="entry name" value="RuBisCO"/>
</dbReference>
<dbReference type="InterPro" id="IPR020878">
    <property type="entry name" value="RuBisCo_large_chain_AS"/>
</dbReference>
<dbReference type="InterPro" id="IPR000685">
    <property type="entry name" value="RuBisCO_lsu_C"/>
</dbReference>
<dbReference type="InterPro" id="IPR036376">
    <property type="entry name" value="RuBisCO_lsu_C_sf"/>
</dbReference>
<dbReference type="InterPro" id="IPR017443">
    <property type="entry name" value="RuBisCO_lsu_fd_N"/>
</dbReference>
<dbReference type="InterPro" id="IPR036422">
    <property type="entry name" value="RuBisCO_lsu_N_sf"/>
</dbReference>
<dbReference type="InterPro" id="IPR020888">
    <property type="entry name" value="RuBisCO_lsuI"/>
</dbReference>
<dbReference type="NCBIfam" id="NF003252">
    <property type="entry name" value="PRK04208.1"/>
    <property type="match status" value="1"/>
</dbReference>
<dbReference type="PANTHER" id="PTHR42704">
    <property type="entry name" value="RIBULOSE BISPHOSPHATE CARBOXYLASE"/>
    <property type="match status" value="1"/>
</dbReference>
<dbReference type="PANTHER" id="PTHR42704:SF15">
    <property type="entry name" value="RIBULOSE BISPHOSPHATE CARBOXYLASE LARGE CHAIN"/>
    <property type="match status" value="1"/>
</dbReference>
<dbReference type="Pfam" id="PF00016">
    <property type="entry name" value="RuBisCO_large"/>
    <property type="match status" value="1"/>
</dbReference>
<dbReference type="Pfam" id="PF02788">
    <property type="entry name" value="RuBisCO_large_N"/>
    <property type="match status" value="1"/>
</dbReference>
<dbReference type="SFLD" id="SFLDG01052">
    <property type="entry name" value="RuBisCO"/>
    <property type="match status" value="1"/>
</dbReference>
<dbReference type="SFLD" id="SFLDS00014">
    <property type="entry name" value="RuBisCO"/>
    <property type="match status" value="1"/>
</dbReference>
<dbReference type="SFLD" id="SFLDG00301">
    <property type="entry name" value="RuBisCO-like_proteins"/>
    <property type="match status" value="1"/>
</dbReference>
<dbReference type="SUPFAM" id="SSF51649">
    <property type="entry name" value="RuBisCo, C-terminal domain"/>
    <property type="match status" value="1"/>
</dbReference>
<dbReference type="SUPFAM" id="SSF54966">
    <property type="entry name" value="RuBisCO, large subunit, small (N-terminal) domain"/>
    <property type="match status" value="1"/>
</dbReference>
<dbReference type="PROSITE" id="PS00157">
    <property type="entry name" value="RUBISCO_LARGE"/>
    <property type="match status" value="1"/>
</dbReference>